<reference key="1">
    <citation type="journal article" date="2006" name="PLoS Genet.">
        <title>Genome sequence of Rickettsia bellii illuminates the role of amoebae in gene exchanges between intracellular pathogens.</title>
        <authorList>
            <person name="Ogata H."/>
            <person name="La Scola B."/>
            <person name="Audic S."/>
            <person name="Renesto P."/>
            <person name="Blanc G."/>
            <person name="Robert C."/>
            <person name="Fournier P.-E."/>
            <person name="Claverie J.-M."/>
            <person name="Raoult D."/>
        </authorList>
    </citation>
    <scope>NUCLEOTIDE SEQUENCE [LARGE SCALE GENOMIC DNA]</scope>
    <source>
        <strain>RML369-C</strain>
    </source>
</reference>
<evidence type="ECO:0000250" key="1"/>
<evidence type="ECO:0000305" key="2"/>
<accession>Q1RHD4</accession>
<organism>
    <name type="scientific">Rickettsia bellii (strain RML369-C)</name>
    <dbReference type="NCBI Taxonomy" id="336407"/>
    <lineage>
        <taxon>Bacteria</taxon>
        <taxon>Pseudomonadati</taxon>
        <taxon>Pseudomonadota</taxon>
        <taxon>Alphaproteobacteria</taxon>
        <taxon>Rickettsiales</taxon>
        <taxon>Rickettsiaceae</taxon>
        <taxon>Rickettsieae</taxon>
        <taxon>Rickettsia</taxon>
        <taxon>belli group</taxon>
    </lineage>
</organism>
<protein>
    <recommendedName>
        <fullName>DNA-binding protein HU</fullName>
    </recommendedName>
</protein>
<sequence length="101" mass="11302">MNKTEFIAFMTEHGHHHKHQGHKSFTKADAEKALNWVLESIISATKHQHSVNITGFGSFGIQSRKSREGRNPKTGAKMTIPAYKQPVFKAGSKLKEACNNK</sequence>
<keyword id="KW-0226">DNA condensation</keyword>
<keyword id="KW-0238">DNA-binding</keyword>
<comment type="function">
    <text evidence="1">Histone-like DNA-binding protein which is capable of wrapping DNA to stabilize it, and thus to prevent its denaturation under extreme environmental conditions.</text>
</comment>
<comment type="subunit">
    <text evidence="1">Homodimer.</text>
</comment>
<comment type="similarity">
    <text evidence="2">Belongs to the bacterial histone-like protein family.</text>
</comment>
<comment type="sequence caution" evidence="2">
    <conflict type="erroneous initiation">
        <sequence resource="EMBL-CDS" id="ABE05230"/>
    </conflict>
</comment>
<name>DBH_RICBR</name>
<gene>
    <name type="primary">hup</name>
    <name type="synonym">hupA</name>
    <name type="ordered locus">RBE_1149</name>
</gene>
<dbReference type="EMBL" id="CP000087">
    <property type="protein sequence ID" value="ABE05230.1"/>
    <property type="status" value="ALT_INIT"/>
    <property type="molecule type" value="Genomic_DNA"/>
</dbReference>
<dbReference type="SMR" id="Q1RHD4"/>
<dbReference type="KEGG" id="rbe:RBE_1149"/>
<dbReference type="eggNOG" id="COG0776">
    <property type="taxonomic scope" value="Bacteria"/>
</dbReference>
<dbReference type="HOGENOM" id="CLU_105066_3_2_5"/>
<dbReference type="Proteomes" id="UP000001951">
    <property type="component" value="Chromosome"/>
</dbReference>
<dbReference type="GO" id="GO:0005829">
    <property type="term" value="C:cytosol"/>
    <property type="evidence" value="ECO:0007669"/>
    <property type="project" value="TreeGrafter"/>
</dbReference>
<dbReference type="GO" id="GO:0003677">
    <property type="term" value="F:DNA binding"/>
    <property type="evidence" value="ECO:0007669"/>
    <property type="project" value="UniProtKB-KW"/>
</dbReference>
<dbReference type="GO" id="GO:0030527">
    <property type="term" value="F:structural constituent of chromatin"/>
    <property type="evidence" value="ECO:0007669"/>
    <property type="project" value="InterPro"/>
</dbReference>
<dbReference type="GO" id="GO:0030261">
    <property type="term" value="P:chromosome condensation"/>
    <property type="evidence" value="ECO:0007669"/>
    <property type="project" value="UniProtKB-KW"/>
</dbReference>
<dbReference type="CDD" id="cd13831">
    <property type="entry name" value="HU"/>
    <property type="match status" value="1"/>
</dbReference>
<dbReference type="Gene3D" id="4.10.520.10">
    <property type="entry name" value="IHF-like DNA-binding proteins"/>
    <property type="match status" value="1"/>
</dbReference>
<dbReference type="InterPro" id="IPR000119">
    <property type="entry name" value="Hist_DNA-bd"/>
</dbReference>
<dbReference type="InterPro" id="IPR020816">
    <property type="entry name" value="Histone-like_DNA-bd_CS"/>
</dbReference>
<dbReference type="InterPro" id="IPR010992">
    <property type="entry name" value="IHF-like_DNA-bd_dom_sf"/>
</dbReference>
<dbReference type="PANTHER" id="PTHR33175">
    <property type="entry name" value="DNA-BINDING PROTEIN HU"/>
    <property type="match status" value="1"/>
</dbReference>
<dbReference type="PANTHER" id="PTHR33175:SF3">
    <property type="entry name" value="DNA-BINDING PROTEIN HU-BETA"/>
    <property type="match status" value="1"/>
</dbReference>
<dbReference type="Pfam" id="PF00216">
    <property type="entry name" value="Bac_DNA_binding"/>
    <property type="match status" value="1"/>
</dbReference>
<dbReference type="PRINTS" id="PR01727">
    <property type="entry name" value="DNABINDINGHU"/>
</dbReference>
<dbReference type="SMART" id="SM00411">
    <property type="entry name" value="BHL"/>
    <property type="match status" value="1"/>
</dbReference>
<dbReference type="SUPFAM" id="SSF47729">
    <property type="entry name" value="IHF-like DNA-binding proteins"/>
    <property type="match status" value="1"/>
</dbReference>
<dbReference type="PROSITE" id="PS00045">
    <property type="entry name" value="HISTONE_LIKE"/>
    <property type="match status" value="1"/>
</dbReference>
<proteinExistence type="inferred from homology"/>
<feature type="chain" id="PRO_0000273732" description="DNA-binding protein HU">
    <location>
        <begin position="1"/>
        <end position="101"/>
    </location>
</feature>